<comment type="function">
    <text evidence="1">Pore-forming subunit of a potassium efflux system that confers protection against electrophiles. Catalyzes K(+)/H(+) antiport.</text>
</comment>
<comment type="subunit">
    <text evidence="1">Interacts with the regulatory subunit KefG.</text>
</comment>
<comment type="subcellular location">
    <subcellularLocation>
        <location evidence="1">Cell inner membrane</location>
        <topology evidence="1">Multi-pass membrane protein</topology>
    </subcellularLocation>
</comment>
<comment type="similarity">
    <text evidence="1">Belongs to the monovalent cation:proton antiporter 2 (CPA2) transporter (TC 2.A.37) family. KefB subfamily.</text>
</comment>
<organism>
    <name type="scientific">Salmonella schwarzengrund (strain CVM19633)</name>
    <dbReference type="NCBI Taxonomy" id="439843"/>
    <lineage>
        <taxon>Bacteria</taxon>
        <taxon>Pseudomonadati</taxon>
        <taxon>Pseudomonadota</taxon>
        <taxon>Gammaproteobacteria</taxon>
        <taxon>Enterobacterales</taxon>
        <taxon>Enterobacteriaceae</taxon>
        <taxon>Salmonella</taxon>
    </lineage>
</organism>
<accession>B4TXF9</accession>
<name>KEFB_SALSV</name>
<feature type="chain" id="PRO_1000145531" description="Glutathione-regulated potassium-efflux system protein KefB">
    <location>
        <begin position="1"/>
        <end position="601"/>
    </location>
</feature>
<feature type="transmembrane region" description="Helical" evidence="1">
    <location>
        <begin position="4"/>
        <end position="24"/>
    </location>
</feature>
<feature type="transmembrane region" description="Helical" evidence="1">
    <location>
        <begin position="29"/>
        <end position="49"/>
    </location>
</feature>
<feature type="transmembrane region" description="Helical" evidence="1">
    <location>
        <begin position="55"/>
        <end position="75"/>
    </location>
</feature>
<feature type="transmembrane region" description="Helical" evidence="1">
    <location>
        <begin position="87"/>
        <end position="107"/>
    </location>
</feature>
<feature type="transmembrane region" description="Helical" evidence="1">
    <location>
        <begin position="111"/>
        <end position="131"/>
    </location>
</feature>
<feature type="transmembrane region" description="Helical" evidence="1">
    <location>
        <begin position="152"/>
        <end position="172"/>
    </location>
</feature>
<feature type="transmembrane region" description="Helical" evidence="1">
    <location>
        <begin position="177"/>
        <end position="197"/>
    </location>
</feature>
<feature type="transmembrane region" description="Helical" evidence="1">
    <location>
        <begin position="207"/>
        <end position="227"/>
    </location>
</feature>
<feature type="transmembrane region" description="Helical" evidence="1">
    <location>
        <begin position="230"/>
        <end position="250"/>
    </location>
</feature>
<feature type="transmembrane region" description="Helical" evidence="1">
    <location>
        <begin position="262"/>
        <end position="282"/>
    </location>
</feature>
<feature type="transmembrane region" description="Helical" evidence="1">
    <location>
        <begin position="284"/>
        <end position="304"/>
    </location>
</feature>
<feature type="transmembrane region" description="Helical" evidence="1">
    <location>
        <begin position="324"/>
        <end position="344"/>
    </location>
</feature>
<feature type="transmembrane region" description="Helical" evidence="1">
    <location>
        <begin position="356"/>
        <end position="376"/>
    </location>
</feature>
<feature type="domain" description="RCK N-terminal" evidence="2">
    <location>
        <begin position="400"/>
        <end position="519"/>
    </location>
</feature>
<reference key="1">
    <citation type="journal article" date="2011" name="J. Bacteriol.">
        <title>Comparative genomics of 28 Salmonella enterica isolates: evidence for CRISPR-mediated adaptive sublineage evolution.</title>
        <authorList>
            <person name="Fricke W.F."/>
            <person name="Mammel M.K."/>
            <person name="McDermott P.F."/>
            <person name="Tartera C."/>
            <person name="White D.G."/>
            <person name="Leclerc J.E."/>
            <person name="Ravel J."/>
            <person name="Cebula T.A."/>
        </authorList>
    </citation>
    <scope>NUCLEOTIDE SEQUENCE [LARGE SCALE GENOMIC DNA]</scope>
    <source>
        <strain>CVM19633</strain>
    </source>
</reference>
<evidence type="ECO:0000255" key="1">
    <source>
        <dbReference type="HAMAP-Rule" id="MF_01412"/>
    </source>
</evidence>
<evidence type="ECO:0000255" key="2">
    <source>
        <dbReference type="PROSITE-ProRule" id="PRU00543"/>
    </source>
</evidence>
<protein>
    <recommendedName>
        <fullName evidence="1">Glutathione-regulated potassium-efflux system protein KefB</fullName>
    </recommendedName>
    <alternativeName>
        <fullName evidence="1">K(+)/H(+) antiporter</fullName>
    </alternativeName>
</protein>
<gene>
    <name evidence="1" type="primary">kefB</name>
    <name type="ordered locus">SeSA_A3653</name>
</gene>
<proteinExistence type="inferred from homology"/>
<keyword id="KW-0050">Antiport</keyword>
<keyword id="KW-0997">Cell inner membrane</keyword>
<keyword id="KW-1003">Cell membrane</keyword>
<keyword id="KW-0406">Ion transport</keyword>
<keyword id="KW-0472">Membrane</keyword>
<keyword id="KW-0630">Potassium</keyword>
<keyword id="KW-0633">Potassium transport</keyword>
<keyword id="KW-0812">Transmembrane</keyword>
<keyword id="KW-1133">Transmembrane helix</keyword>
<keyword id="KW-0813">Transport</keyword>
<sequence length="601" mass="66374">MEGADLLTAGVLFLFAAVAAVPLAARLGIGAVLGYLLAGIAIGPWGLGFISDVDEILHFSELGVVFLMFIIGLELNPSRLWQLRRSIFGVGAAQVLLSAAVLAGLLMLADFLWQAAVVGGIGLAMSSTAMALQLMREKGMNRSESGQLGFSVLLFQDLAVIPALALVPLLAGSADEHFDWFKVAMKVLAFAVMLIGGRYLLRPVFRFIAASGVREVFTAATLLLVLSAALFMDALGLSMALGTFIAGVLLAESEYRHELENAIDPFKGLLLGLFFISVGMSLNLGVLYTHLLWVAASVVILVAIKMLTLYLLARLYGIRSSERMQFASVLSQGGEFAFVLFSTASSQRLFQGDQMALLLVTVTLSMMTTPLLMKGIDKWLSRRLNGPEENDEKPWVEDDKPQVIVVGFGRFGQVIARLLMANKMRITVLERDIGAVNLMRKYGYKVYYGDATQVELLRSAGAEAAESIVITCNEPEDTMKLVALCQQHFPHLHILARARGRVEAHELLQAGVTQFSRETFSSALELGRKTLVSLGMHPHQAQRAQLHFRRLDMRMLRELIPEHSDMVQISRAREARRELEEIFQREMQQERRQLDGWDEFE</sequence>
<dbReference type="EMBL" id="CP001127">
    <property type="protein sequence ID" value="ACF91291.1"/>
    <property type="molecule type" value="Genomic_DNA"/>
</dbReference>
<dbReference type="RefSeq" id="WP_000398129.1">
    <property type="nucleotide sequence ID" value="NC_011094.1"/>
</dbReference>
<dbReference type="SMR" id="B4TXF9"/>
<dbReference type="KEGG" id="sew:SeSA_A3653"/>
<dbReference type="HOGENOM" id="CLU_005126_9_3_6"/>
<dbReference type="Proteomes" id="UP000001865">
    <property type="component" value="Chromosome"/>
</dbReference>
<dbReference type="GO" id="GO:0005886">
    <property type="term" value="C:plasma membrane"/>
    <property type="evidence" value="ECO:0007669"/>
    <property type="project" value="UniProtKB-SubCell"/>
</dbReference>
<dbReference type="GO" id="GO:0015503">
    <property type="term" value="F:glutathione-regulated potassium exporter activity"/>
    <property type="evidence" value="ECO:0007669"/>
    <property type="project" value="UniProtKB-UniRule"/>
</dbReference>
<dbReference type="GO" id="GO:1902600">
    <property type="term" value="P:proton transmembrane transport"/>
    <property type="evidence" value="ECO:0007669"/>
    <property type="project" value="InterPro"/>
</dbReference>
<dbReference type="FunFam" id="1.20.1530.20:FF:000001">
    <property type="entry name" value="Glutathione-regulated potassium-efflux system protein KefB"/>
    <property type="match status" value="1"/>
</dbReference>
<dbReference type="FunFam" id="3.40.50.720:FF:000036">
    <property type="entry name" value="Glutathione-regulated potassium-efflux system protein KefB"/>
    <property type="match status" value="1"/>
</dbReference>
<dbReference type="Gene3D" id="1.20.1530.20">
    <property type="match status" value="1"/>
</dbReference>
<dbReference type="Gene3D" id="3.40.50.720">
    <property type="entry name" value="NAD(P)-binding Rossmann-like Domain"/>
    <property type="match status" value="1"/>
</dbReference>
<dbReference type="HAMAP" id="MF_01412">
    <property type="entry name" value="K_H_efflux_KefB"/>
    <property type="match status" value="1"/>
</dbReference>
<dbReference type="InterPro" id="IPR006153">
    <property type="entry name" value="Cation/H_exchanger_TM"/>
</dbReference>
<dbReference type="InterPro" id="IPR004771">
    <property type="entry name" value="K/H_exchanger"/>
</dbReference>
<dbReference type="InterPro" id="IPR020884">
    <property type="entry name" value="K_H_efflux_KefB"/>
</dbReference>
<dbReference type="InterPro" id="IPR006036">
    <property type="entry name" value="K_uptake_TrkA"/>
</dbReference>
<dbReference type="InterPro" id="IPR038770">
    <property type="entry name" value="Na+/solute_symporter_sf"/>
</dbReference>
<dbReference type="InterPro" id="IPR036291">
    <property type="entry name" value="NAD(P)-bd_dom_sf"/>
</dbReference>
<dbReference type="InterPro" id="IPR003148">
    <property type="entry name" value="RCK_N"/>
</dbReference>
<dbReference type="NCBIfam" id="TIGR00932">
    <property type="entry name" value="2a37"/>
    <property type="match status" value="1"/>
</dbReference>
<dbReference type="NCBIfam" id="NF002973">
    <property type="entry name" value="PRK03659.1"/>
    <property type="match status" value="1"/>
</dbReference>
<dbReference type="PANTHER" id="PTHR46157">
    <property type="entry name" value="K(+) EFFLUX ANTIPORTER 3, CHLOROPLASTIC"/>
    <property type="match status" value="1"/>
</dbReference>
<dbReference type="PANTHER" id="PTHR46157:SF4">
    <property type="entry name" value="K(+) EFFLUX ANTIPORTER 3, CHLOROPLASTIC"/>
    <property type="match status" value="1"/>
</dbReference>
<dbReference type="Pfam" id="PF00999">
    <property type="entry name" value="Na_H_Exchanger"/>
    <property type="match status" value="1"/>
</dbReference>
<dbReference type="Pfam" id="PF02254">
    <property type="entry name" value="TrkA_N"/>
    <property type="match status" value="1"/>
</dbReference>
<dbReference type="PRINTS" id="PR00335">
    <property type="entry name" value="KUPTAKETRKA"/>
</dbReference>
<dbReference type="SUPFAM" id="SSF51735">
    <property type="entry name" value="NAD(P)-binding Rossmann-fold domains"/>
    <property type="match status" value="1"/>
</dbReference>
<dbReference type="PROSITE" id="PS51201">
    <property type="entry name" value="RCK_N"/>
    <property type="match status" value="1"/>
</dbReference>